<protein>
    <recommendedName>
        <fullName evidence="1">TRPM8 channel-associated factor 1</fullName>
    </recommendedName>
    <alternativeName>
        <fullName evidence="1">TRP channel-associated factor 1</fullName>
    </alternativeName>
</protein>
<proteinExistence type="evidence at transcript level"/>
<accession>A5PJN5</accession>
<comment type="function">
    <text evidence="1">Positively regulates the plasma membrane cation channel TRPM8 activity. Involved in the recruitment of TRPM8 to the cell surface. Promotes prostate cancer cell migration inhibition in a TRPM8-dependent manner.</text>
</comment>
<comment type="subunit">
    <text evidence="1">Interacts with TRPM8 (via N-terminus and C-terminus domains); the interaction inhibits TRPM8 channel activity. Interacts with TRPV6.</text>
</comment>
<comment type="subcellular location">
    <subcellularLocation>
        <location evidence="1">Cell membrane</location>
    </subcellularLocation>
    <text evidence="1">Colocalizes with TRPM8 on the plasma membrane.</text>
</comment>
<comment type="domain">
    <text evidence="1">The C-terminal region is necessary for the channel activity stimulation.</text>
</comment>
<comment type="similarity">
    <text evidence="3">Belongs to the TCAF family.</text>
</comment>
<organism>
    <name type="scientific">Bos taurus</name>
    <name type="common">Bovine</name>
    <dbReference type="NCBI Taxonomy" id="9913"/>
    <lineage>
        <taxon>Eukaryota</taxon>
        <taxon>Metazoa</taxon>
        <taxon>Chordata</taxon>
        <taxon>Craniata</taxon>
        <taxon>Vertebrata</taxon>
        <taxon>Euteleostomi</taxon>
        <taxon>Mammalia</taxon>
        <taxon>Eutheria</taxon>
        <taxon>Laurasiatheria</taxon>
        <taxon>Artiodactyla</taxon>
        <taxon>Ruminantia</taxon>
        <taxon>Pecora</taxon>
        <taxon>Bovidae</taxon>
        <taxon>Bovinae</taxon>
        <taxon>Bos</taxon>
    </lineage>
</organism>
<keyword id="KW-1003">Cell membrane</keyword>
<keyword id="KW-0472">Membrane</keyword>
<keyword id="KW-1185">Reference proteome</keyword>
<keyword id="KW-0813">Transport</keyword>
<gene>
    <name evidence="1" type="primary">TCAF1</name>
    <name type="synonym">FAM115A</name>
</gene>
<evidence type="ECO:0000250" key="1">
    <source>
        <dbReference type="UniProtKB" id="Q9Y4C2"/>
    </source>
</evidence>
<evidence type="ECO:0000255" key="2">
    <source>
        <dbReference type="PROSITE-ProRule" id="PRU01060"/>
    </source>
</evidence>
<evidence type="ECO:0000305" key="3"/>
<sequence>MATPSAAFEALMNGVTSWNVPEDAVPCELLLIGEASFPVMVNDMGQVLIAASSYGRGRLVVVSHEDYLVEAQLTPFLLNAVGWLCSSPGAPVGVHPSLAPLAKILEGSGVEAKVEPEVKDSLGVYCIDAYNETMTEKLVKFMKRGGGLLIGGQAWDWANQGDDERVLFTFPGNLVTSVAGVYFTDNKGDTSFFKVSKKMPKIPVLVSCEDDLSEDRDELLHGISELDITNSDCFPSQLLVHGALAFPLGLDSYHGCVIAAARYGRGRVVVTGHKVLFTVGKLGPFLLNAVRWLDAGRRGKIVVQTELRTLSGLLAVGGIDTSIEPNLTSDASVYCFEPVSDVGVKELQEFVAEGGGLFVGAQAWWWAFKNPGVSPLARFPGNLLLNPFGISITSQSLNPGPFRTPKAGIRTYHFRSTLAEFQVIMGRKRGNVEKGWLAKLGPDGAAFLQIPAEEIPAYMSVHRLLRKLLSRYRLPVATRENPVINDCCRGAMLSLATGLAHSGSDLSLLVPEIEDMYSSPYLRPSESPITVEVNCNNPGTRYCWMSTGLYIPGRQIIEVSLPEAAASADLKIQIGCHTDDLTRASKLFRGPLVINRCCLDKPTKSITCLWGGLLYIIVPQSSKLGTVPVTIKGAVRAPYYKLGETTQEEWKRQIQENPGPWGELATDNIILTVPTANLRTLENPEPLLRLWDEVMQAVARLGAEPFPLRLPQRIVADVQISVGWMHAGYPIMCHLESVQELINEKLIRTKGLWGPVHELGRNQQRQEWEFPPHTTEATCNLWCVYVHETVLGIPRGRANIALWPPVREKRVRIYLGKGPNVKNWNAWTALETYLQLQEAFGWEPFIRLFTEYRNQTNLPTDNVDKMNLWVKMFSHQVQKNLAPFFEAWAWPIQKEVATSLAYLPEWEENIMKLYLLTQMPH</sequence>
<dbReference type="EMBL" id="BC142182">
    <property type="protein sequence ID" value="AAI42183.1"/>
    <property type="molecule type" value="mRNA"/>
</dbReference>
<dbReference type="RefSeq" id="NP_001092524.1">
    <property type="nucleotide sequence ID" value="NM_001099054.1"/>
</dbReference>
<dbReference type="FunCoup" id="A5PJN5">
    <property type="interactions" value="1041"/>
</dbReference>
<dbReference type="STRING" id="9913.ENSBTAP00000050827"/>
<dbReference type="MEROPS" id="M98.A03"/>
<dbReference type="PaxDb" id="9913-ENSBTAP00000050827"/>
<dbReference type="GeneID" id="533126"/>
<dbReference type="KEGG" id="bta:533126"/>
<dbReference type="CTD" id="9747"/>
<dbReference type="eggNOG" id="ENOG502S2AP">
    <property type="taxonomic scope" value="Eukaryota"/>
</dbReference>
<dbReference type="InParanoid" id="A5PJN5"/>
<dbReference type="OrthoDB" id="10260387at2759"/>
<dbReference type="Proteomes" id="UP000009136">
    <property type="component" value="Unplaced"/>
</dbReference>
<dbReference type="GO" id="GO:0005886">
    <property type="term" value="C:plasma membrane"/>
    <property type="evidence" value="ECO:0000318"/>
    <property type="project" value="GO_Central"/>
</dbReference>
<dbReference type="GO" id="GO:0044325">
    <property type="term" value="F:transmembrane transporter binding"/>
    <property type="evidence" value="ECO:0000318"/>
    <property type="project" value="GO_Central"/>
</dbReference>
<dbReference type="FunFam" id="1.10.390.30:FF:000001">
    <property type="entry name" value="TRPM8 channel-associated factor 1"/>
    <property type="match status" value="1"/>
</dbReference>
<dbReference type="FunFam" id="3.40.390.80:FF:000001">
    <property type="entry name" value="TRPM8 channel-associated factor 1"/>
    <property type="match status" value="1"/>
</dbReference>
<dbReference type="Gene3D" id="3.40.390.80">
    <property type="entry name" value="Peptidase M60, enhancin-like domain 2"/>
    <property type="match status" value="1"/>
</dbReference>
<dbReference type="Gene3D" id="1.10.390.30">
    <property type="entry name" value="Peptidase M60, enhancin-like domain 3"/>
    <property type="match status" value="1"/>
</dbReference>
<dbReference type="InterPro" id="IPR029062">
    <property type="entry name" value="Class_I_gatase-like"/>
</dbReference>
<dbReference type="InterPro" id="IPR035423">
    <property type="entry name" value="M60-like_N"/>
</dbReference>
<dbReference type="InterPro" id="IPR042279">
    <property type="entry name" value="Pep_M60_3"/>
</dbReference>
<dbReference type="InterPro" id="IPR031161">
    <property type="entry name" value="Peptidase_M60_dom"/>
</dbReference>
<dbReference type="InterPro" id="IPR051244">
    <property type="entry name" value="TCAF"/>
</dbReference>
<dbReference type="PANTHER" id="PTHR15730">
    <property type="entry name" value="EXPERIMENTAL AUTOIMMUNE PROSTATITIS ANTIGEN 2-RELATED"/>
    <property type="match status" value="1"/>
</dbReference>
<dbReference type="PANTHER" id="PTHR15730:SF1">
    <property type="entry name" value="TRPM8 CHANNEL-ASSOCIATED FACTOR 1"/>
    <property type="match status" value="1"/>
</dbReference>
<dbReference type="Pfam" id="PF17291">
    <property type="entry name" value="M60-like_N"/>
    <property type="match status" value="1"/>
</dbReference>
<dbReference type="Pfam" id="PF13402">
    <property type="entry name" value="Peptidase_M60"/>
    <property type="match status" value="1"/>
</dbReference>
<dbReference type="SMART" id="SM01276">
    <property type="entry name" value="M60-like"/>
    <property type="match status" value="1"/>
</dbReference>
<dbReference type="SUPFAM" id="SSF52317">
    <property type="entry name" value="Class I glutamine amidotransferase-like"/>
    <property type="match status" value="1"/>
</dbReference>
<dbReference type="PROSITE" id="PS51723">
    <property type="entry name" value="PEPTIDASE_M60"/>
    <property type="match status" value="1"/>
</dbReference>
<feature type="chain" id="PRO_0000320181" description="TRPM8 channel-associated factor 1">
    <location>
        <begin position="1"/>
        <end position="921"/>
    </location>
</feature>
<feature type="domain" description="Peptidase M60" evidence="2">
    <location>
        <begin position="542"/>
        <end position="841"/>
    </location>
</feature>
<name>TCAF1_BOVIN</name>
<reference key="1">
    <citation type="submission" date="2007-06" db="EMBL/GenBank/DDBJ databases">
        <authorList>
            <consortium name="NIH - Mammalian Gene Collection (MGC) project"/>
        </authorList>
    </citation>
    <scope>NUCLEOTIDE SEQUENCE [LARGE SCALE MRNA]</scope>
    <source>
        <strain>Hereford</strain>
        <tissue>Uterus</tissue>
    </source>
</reference>